<sequence>MSKRASSKYKIDRRMGENIWGRPKSPVNRREYGPGQHGQRRKGKLSDFGVQLRAKQKLKGYYGDLREKQFRATYDEANRRKGDTSENLIGLLESRLDAIVYRAKFVPTVFAARQFVNHGHVSVNGVKVNIGSYRCKAGDVIEVRQKSKQLAIVLEATQLAERDVPDYIEVDHNKMVATFVRVPTLSDVPYAVIMEPQLVVEFYSR</sequence>
<gene>
    <name evidence="1" type="primary">rpsD</name>
    <name type="ordered locus">Avi_1927</name>
</gene>
<proteinExistence type="inferred from homology"/>
<protein>
    <recommendedName>
        <fullName evidence="1">Small ribosomal subunit protein uS4</fullName>
    </recommendedName>
    <alternativeName>
        <fullName evidence="3">30S ribosomal protein S4</fullName>
    </alternativeName>
</protein>
<dbReference type="EMBL" id="CP000633">
    <property type="protein sequence ID" value="ACM36383.1"/>
    <property type="molecule type" value="Genomic_DNA"/>
</dbReference>
<dbReference type="RefSeq" id="WP_015915804.1">
    <property type="nucleotide sequence ID" value="NC_011989.1"/>
</dbReference>
<dbReference type="SMR" id="B9JVV3"/>
<dbReference type="STRING" id="311402.Avi_1927"/>
<dbReference type="KEGG" id="avi:Avi_1927"/>
<dbReference type="eggNOG" id="COG0522">
    <property type="taxonomic scope" value="Bacteria"/>
</dbReference>
<dbReference type="HOGENOM" id="CLU_092403_0_0_5"/>
<dbReference type="Proteomes" id="UP000001596">
    <property type="component" value="Chromosome 1"/>
</dbReference>
<dbReference type="GO" id="GO:0015935">
    <property type="term" value="C:small ribosomal subunit"/>
    <property type="evidence" value="ECO:0007669"/>
    <property type="project" value="InterPro"/>
</dbReference>
<dbReference type="GO" id="GO:0019843">
    <property type="term" value="F:rRNA binding"/>
    <property type="evidence" value="ECO:0007669"/>
    <property type="project" value="UniProtKB-UniRule"/>
</dbReference>
<dbReference type="GO" id="GO:0003735">
    <property type="term" value="F:structural constituent of ribosome"/>
    <property type="evidence" value="ECO:0007669"/>
    <property type="project" value="InterPro"/>
</dbReference>
<dbReference type="GO" id="GO:0042274">
    <property type="term" value="P:ribosomal small subunit biogenesis"/>
    <property type="evidence" value="ECO:0007669"/>
    <property type="project" value="TreeGrafter"/>
</dbReference>
<dbReference type="GO" id="GO:0006412">
    <property type="term" value="P:translation"/>
    <property type="evidence" value="ECO:0007669"/>
    <property type="project" value="UniProtKB-UniRule"/>
</dbReference>
<dbReference type="CDD" id="cd00165">
    <property type="entry name" value="S4"/>
    <property type="match status" value="1"/>
</dbReference>
<dbReference type="FunFam" id="3.10.290.10:FF:000001">
    <property type="entry name" value="30S ribosomal protein S4"/>
    <property type="match status" value="1"/>
</dbReference>
<dbReference type="Gene3D" id="1.10.1050.10">
    <property type="entry name" value="Ribosomal Protein S4 Delta 41, Chain A, domain 1"/>
    <property type="match status" value="1"/>
</dbReference>
<dbReference type="Gene3D" id="3.10.290.10">
    <property type="entry name" value="RNA-binding S4 domain"/>
    <property type="match status" value="1"/>
</dbReference>
<dbReference type="HAMAP" id="MF_01306_B">
    <property type="entry name" value="Ribosomal_uS4_B"/>
    <property type="match status" value="1"/>
</dbReference>
<dbReference type="InterPro" id="IPR022801">
    <property type="entry name" value="Ribosomal_uS4"/>
</dbReference>
<dbReference type="InterPro" id="IPR005709">
    <property type="entry name" value="Ribosomal_uS4_bac-type"/>
</dbReference>
<dbReference type="InterPro" id="IPR018079">
    <property type="entry name" value="Ribosomal_uS4_CS"/>
</dbReference>
<dbReference type="InterPro" id="IPR001912">
    <property type="entry name" value="Ribosomal_uS4_N"/>
</dbReference>
<dbReference type="InterPro" id="IPR002942">
    <property type="entry name" value="S4_RNA-bd"/>
</dbReference>
<dbReference type="InterPro" id="IPR036986">
    <property type="entry name" value="S4_RNA-bd_sf"/>
</dbReference>
<dbReference type="NCBIfam" id="NF003717">
    <property type="entry name" value="PRK05327.1"/>
    <property type="match status" value="1"/>
</dbReference>
<dbReference type="NCBIfam" id="TIGR01017">
    <property type="entry name" value="rpsD_bact"/>
    <property type="match status" value="1"/>
</dbReference>
<dbReference type="PANTHER" id="PTHR11831">
    <property type="entry name" value="30S 40S RIBOSOMAL PROTEIN"/>
    <property type="match status" value="1"/>
</dbReference>
<dbReference type="PANTHER" id="PTHR11831:SF4">
    <property type="entry name" value="SMALL RIBOSOMAL SUBUNIT PROTEIN US4M"/>
    <property type="match status" value="1"/>
</dbReference>
<dbReference type="Pfam" id="PF00163">
    <property type="entry name" value="Ribosomal_S4"/>
    <property type="match status" value="1"/>
</dbReference>
<dbReference type="Pfam" id="PF01479">
    <property type="entry name" value="S4"/>
    <property type="match status" value="1"/>
</dbReference>
<dbReference type="SMART" id="SM01390">
    <property type="entry name" value="Ribosomal_S4"/>
    <property type="match status" value="1"/>
</dbReference>
<dbReference type="SMART" id="SM00363">
    <property type="entry name" value="S4"/>
    <property type="match status" value="1"/>
</dbReference>
<dbReference type="SUPFAM" id="SSF55174">
    <property type="entry name" value="Alpha-L RNA-binding motif"/>
    <property type="match status" value="1"/>
</dbReference>
<dbReference type="PROSITE" id="PS00632">
    <property type="entry name" value="RIBOSOMAL_S4"/>
    <property type="match status" value="1"/>
</dbReference>
<dbReference type="PROSITE" id="PS50889">
    <property type="entry name" value="S4"/>
    <property type="match status" value="1"/>
</dbReference>
<organism>
    <name type="scientific">Allorhizobium ampelinum (strain ATCC BAA-846 / DSM 112012 / S4)</name>
    <name type="common">Agrobacterium vitis (strain S4)</name>
    <dbReference type="NCBI Taxonomy" id="311402"/>
    <lineage>
        <taxon>Bacteria</taxon>
        <taxon>Pseudomonadati</taxon>
        <taxon>Pseudomonadota</taxon>
        <taxon>Alphaproteobacteria</taxon>
        <taxon>Hyphomicrobiales</taxon>
        <taxon>Rhizobiaceae</taxon>
        <taxon>Rhizobium/Agrobacterium group</taxon>
        <taxon>Allorhizobium</taxon>
        <taxon>Allorhizobium ampelinum</taxon>
    </lineage>
</organism>
<reference key="1">
    <citation type="journal article" date="2009" name="J. Bacteriol.">
        <title>Genome sequences of three Agrobacterium biovars help elucidate the evolution of multichromosome genomes in bacteria.</title>
        <authorList>
            <person name="Slater S.C."/>
            <person name="Goldman B.S."/>
            <person name="Goodner B."/>
            <person name="Setubal J.C."/>
            <person name="Farrand S.K."/>
            <person name="Nester E.W."/>
            <person name="Burr T.J."/>
            <person name="Banta L."/>
            <person name="Dickerman A.W."/>
            <person name="Paulsen I."/>
            <person name="Otten L."/>
            <person name="Suen G."/>
            <person name="Welch R."/>
            <person name="Almeida N.F."/>
            <person name="Arnold F."/>
            <person name="Burton O.T."/>
            <person name="Du Z."/>
            <person name="Ewing A."/>
            <person name="Godsy E."/>
            <person name="Heisel S."/>
            <person name="Houmiel K.L."/>
            <person name="Jhaveri J."/>
            <person name="Lu J."/>
            <person name="Miller N.M."/>
            <person name="Norton S."/>
            <person name="Chen Q."/>
            <person name="Phoolcharoen W."/>
            <person name="Ohlin V."/>
            <person name="Ondrusek D."/>
            <person name="Pride N."/>
            <person name="Stricklin S.L."/>
            <person name="Sun J."/>
            <person name="Wheeler C."/>
            <person name="Wilson L."/>
            <person name="Zhu H."/>
            <person name="Wood D.W."/>
        </authorList>
    </citation>
    <scope>NUCLEOTIDE SEQUENCE [LARGE SCALE GENOMIC DNA]</scope>
    <source>
        <strain>ATCC BAA-846 / DSM 112012 / S4</strain>
    </source>
</reference>
<comment type="function">
    <text evidence="1">One of the primary rRNA binding proteins, it binds directly to 16S rRNA where it nucleates assembly of the body of the 30S subunit.</text>
</comment>
<comment type="function">
    <text evidence="1">With S5 and S12 plays an important role in translational accuracy.</text>
</comment>
<comment type="subunit">
    <text evidence="1">Part of the 30S ribosomal subunit. Contacts protein S5. The interaction surface between S4 and S5 is involved in control of translational fidelity.</text>
</comment>
<comment type="similarity">
    <text evidence="1">Belongs to the universal ribosomal protein uS4 family.</text>
</comment>
<evidence type="ECO:0000255" key="1">
    <source>
        <dbReference type="HAMAP-Rule" id="MF_01306"/>
    </source>
</evidence>
<evidence type="ECO:0000256" key="2">
    <source>
        <dbReference type="SAM" id="MobiDB-lite"/>
    </source>
</evidence>
<evidence type="ECO:0000305" key="3"/>
<accession>B9JVV3</accession>
<keyword id="KW-1185">Reference proteome</keyword>
<keyword id="KW-0687">Ribonucleoprotein</keyword>
<keyword id="KW-0689">Ribosomal protein</keyword>
<keyword id="KW-0694">RNA-binding</keyword>
<keyword id="KW-0699">rRNA-binding</keyword>
<name>RS4_ALLAM</name>
<feature type="chain" id="PRO_1000165376" description="Small ribosomal subunit protein uS4">
    <location>
        <begin position="1"/>
        <end position="205"/>
    </location>
</feature>
<feature type="domain" description="S4 RNA-binding" evidence="1">
    <location>
        <begin position="94"/>
        <end position="154"/>
    </location>
</feature>
<feature type="region of interest" description="Disordered" evidence="2">
    <location>
        <begin position="1"/>
        <end position="46"/>
    </location>
</feature>